<dbReference type="SMR" id="P0DJ47"/>
<dbReference type="GO" id="GO:0005576">
    <property type="term" value="C:extracellular region"/>
    <property type="evidence" value="ECO:0000303"/>
    <property type="project" value="UniProtKB"/>
</dbReference>
<dbReference type="GO" id="GO:0005615">
    <property type="term" value="C:extracellular space"/>
    <property type="evidence" value="ECO:0007669"/>
    <property type="project" value="TreeGrafter"/>
</dbReference>
<dbReference type="GO" id="GO:0033644">
    <property type="term" value="C:host cell membrane"/>
    <property type="evidence" value="ECO:0000303"/>
    <property type="project" value="UniProtKB"/>
</dbReference>
<dbReference type="GO" id="GO:0015459">
    <property type="term" value="F:potassium channel regulator activity"/>
    <property type="evidence" value="ECO:0007669"/>
    <property type="project" value="UniProtKB-KW"/>
</dbReference>
<dbReference type="GO" id="GO:0004867">
    <property type="term" value="F:serine-type endopeptidase inhibitor activity"/>
    <property type="evidence" value="ECO:0000314"/>
    <property type="project" value="UniProtKB"/>
</dbReference>
<dbReference type="GO" id="GO:0090729">
    <property type="term" value="F:toxin activity"/>
    <property type="evidence" value="ECO:0007669"/>
    <property type="project" value="UniProtKB-KW"/>
</dbReference>
<dbReference type="GO" id="GO:0044562">
    <property type="term" value="P:envenomation resulting in negative regulation of voltage-gated potassium channel activity in another organism"/>
    <property type="evidence" value="ECO:0000314"/>
    <property type="project" value="UniProtKB"/>
</dbReference>
<dbReference type="FunFam" id="4.10.410.10:FF:000072">
    <property type="entry name" value="Kunitz-type serine protease inhibitor BmKTT-3"/>
    <property type="match status" value="1"/>
</dbReference>
<dbReference type="Gene3D" id="4.10.410.10">
    <property type="entry name" value="Pancreatic trypsin inhibitor Kunitz domain"/>
    <property type="match status" value="1"/>
</dbReference>
<dbReference type="InterPro" id="IPR002223">
    <property type="entry name" value="Kunitz_BPTI"/>
</dbReference>
<dbReference type="InterPro" id="IPR036880">
    <property type="entry name" value="Kunitz_BPTI_sf"/>
</dbReference>
<dbReference type="InterPro" id="IPR020901">
    <property type="entry name" value="Prtase_inh_Kunz-CS"/>
</dbReference>
<dbReference type="InterPro" id="IPR050098">
    <property type="entry name" value="TFPI/VKTCI-like"/>
</dbReference>
<dbReference type="PANTHER" id="PTHR10083:SF374">
    <property type="entry name" value="BPTI_KUNITZ INHIBITOR DOMAIN-CONTAINING PROTEIN"/>
    <property type="match status" value="1"/>
</dbReference>
<dbReference type="PANTHER" id="PTHR10083">
    <property type="entry name" value="KUNITZ-TYPE PROTEASE INHIBITOR-RELATED"/>
    <property type="match status" value="1"/>
</dbReference>
<dbReference type="Pfam" id="PF00014">
    <property type="entry name" value="Kunitz_BPTI"/>
    <property type="match status" value="1"/>
</dbReference>
<dbReference type="PRINTS" id="PR00759">
    <property type="entry name" value="BASICPTASE"/>
</dbReference>
<dbReference type="SMART" id="SM00131">
    <property type="entry name" value="KU"/>
    <property type="match status" value="1"/>
</dbReference>
<dbReference type="SUPFAM" id="SSF57362">
    <property type="entry name" value="BPTI-like"/>
    <property type="match status" value="1"/>
</dbReference>
<dbReference type="PROSITE" id="PS00280">
    <property type="entry name" value="BPTI_KUNITZ_1"/>
    <property type="match status" value="1"/>
</dbReference>
<dbReference type="PROSITE" id="PS50279">
    <property type="entry name" value="BPTI_KUNITZ_2"/>
    <property type="match status" value="1"/>
</dbReference>
<accession>P0DJ47</accession>
<reference key="1">
    <citation type="journal article" date="2012" name="J. Biol. Chem.">
        <title>Hg1, novel peptide inhibitor specific for Kv1.3 channels from first scorpion Kunitz-type potassium channel toxin family.</title>
        <authorList>
            <person name="Chen Z.-Y."/>
            <person name="Hu Y.T."/>
            <person name="Yang W.S."/>
            <person name="He Y.W."/>
            <person name="Feng J."/>
            <person name="Wang B."/>
            <person name="Zhao R.M."/>
            <person name="Ding J.P."/>
            <person name="Cao Z.-J."/>
            <person name="Li W.-X."/>
            <person name="Wu Y.-L."/>
        </authorList>
    </citation>
    <scope>NUCLEOTIDE SEQUENCE [MRNA]</scope>
    <scope>FUNCTION</scope>
    <scope>RECOMBINANT EXPRESSION</scope>
    <source>
        <tissue>Venom gland</tissue>
    </source>
</reference>
<keyword id="KW-1015">Disulfide bond</keyword>
<keyword id="KW-0646">Protease inhibitor</keyword>
<keyword id="KW-0964">Secreted</keyword>
<keyword id="KW-0722">Serine protease inhibitor</keyword>
<name>VKT12_OLIMR</name>
<comment type="function">
    <text evidence="3">Serine protease inhibitor that inhibits 85% of the activity of trypsin at a molar ratio of 4:1 (Ki=760 nM).</text>
</comment>
<comment type="subcellular location">
    <subcellularLocation>
        <location evidence="6">Secreted</location>
    </subcellularLocation>
</comment>
<comment type="tissue specificity">
    <text evidence="6">Expressed by the venom gland.</text>
</comment>
<comment type="miscellaneous">
    <text evidence="3">Negative results: has no effect on chymotrypsin and elastase. Shows weak inhibitory activity on mKv1.3/KCNA3 potassium channel.</text>
</comment>
<comment type="similarity">
    <text evidence="5">Belongs to the venom Kunitz-type family. Scorpion delta-Ktx subfamily. Delta-Ktx 1 sub-subfamily.</text>
</comment>
<evidence type="ECO:0000250" key="1"/>
<evidence type="ECO:0000255" key="2">
    <source>
        <dbReference type="PROSITE-ProRule" id="PRU00031"/>
    </source>
</evidence>
<evidence type="ECO:0000269" key="3">
    <source>
    </source>
</evidence>
<evidence type="ECO:0000303" key="4">
    <source>
    </source>
</evidence>
<evidence type="ECO:0000305" key="5"/>
<evidence type="ECO:0000305" key="6">
    <source>
    </source>
</evidence>
<organism>
    <name type="scientific">Olivierus martensii</name>
    <name type="common">Manchurian scorpion</name>
    <name type="synonym">Mesobuthus martensii</name>
    <dbReference type="NCBI Taxonomy" id="34649"/>
    <lineage>
        <taxon>Eukaryota</taxon>
        <taxon>Metazoa</taxon>
        <taxon>Ecdysozoa</taxon>
        <taxon>Arthropoda</taxon>
        <taxon>Chelicerata</taxon>
        <taxon>Arachnida</taxon>
        <taxon>Scorpiones</taxon>
        <taxon>Buthida</taxon>
        <taxon>Buthoidea</taxon>
        <taxon>Buthidae</taxon>
        <taxon>Olivierus</taxon>
    </lineage>
</organism>
<proteinExistence type="inferred from homology"/>
<feature type="chain" id="PRO_0000418101" description="Kunitz-type serine protease inhibitor BmKTT-3">
    <location>
        <begin position="1"/>
        <end position="70"/>
    </location>
</feature>
<feature type="domain" description="BPTI/Kunitz inhibitor" evidence="2">
    <location>
        <begin position="7"/>
        <end position="57"/>
    </location>
</feature>
<feature type="site" description="Reactive bond for trypsin" evidence="1">
    <location>
        <begin position="17"/>
        <end position="18"/>
    </location>
</feature>
<feature type="disulfide bond" evidence="2">
    <location>
        <begin position="7"/>
        <end position="57"/>
    </location>
</feature>
<feature type="disulfide bond" evidence="2">
    <location>
        <begin position="16"/>
        <end position="40"/>
    </location>
</feature>
<feature type="disulfide bond" evidence="2">
    <location>
        <begin position="32"/>
        <end position="53"/>
    </location>
</feature>
<protein>
    <recommendedName>
        <fullName evidence="4">Kunitz-type serine protease inhibitor BmKTT-3</fullName>
    </recommendedName>
    <alternativeName>
        <fullName>Delta-KTx 1.2</fullName>
    </alternativeName>
</protein>
<sequence>KHGSINCRLPPERGPCRGNITKYYYHNESRTCRTFSYGGCEGNSNNFRNRHYCMKYCARKRHGWLGTGWI</sequence>